<dbReference type="EMBL" id="AJ937744">
    <property type="protein sequence ID" value="CAI78449.1"/>
    <property type="molecule type" value="mRNA"/>
</dbReference>
<dbReference type="SMR" id="Q1RQJ1"/>
<dbReference type="Allergome" id="2678">
    <property type="allergen name" value="Asp f 28"/>
</dbReference>
<dbReference type="Allergome" id="3119">
    <property type="allergen name" value="Asp f 28.0101"/>
</dbReference>
<dbReference type="CDD" id="cd02947">
    <property type="entry name" value="TRX_family"/>
    <property type="match status" value="1"/>
</dbReference>
<dbReference type="FunFam" id="3.40.30.10:FF:000245">
    <property type="entry name" value="Thioredoxin"/>
    <property type="match status" value="1"/>
</dbReference>
<dbReference type="Gene3D" id="3.40.30.10">
    <property type="entry name" value="Glutaredoxin"/>
    <property type="match status" value="1"/>
</dbReference>
<dbReference type="InterPro" id="IPR036249">
    <property type="entry name" value="Thioredoxin-like_sf"/>
</dbReference>
<dbReference type="InterPro" id="IPR017937">
    <property type="entry name" value="Thioredoxin_CS"/>
</dbReference>
<dbReference type="InterPro" id="IPR013766">
    <property type="entry name" value="Thioredoxin_domain"/>
</dbReference>
<dbReference type="PANTHER" id="PTHR46115">
    <property type="entry name" value="THIOREDOXIN-LIKE PROTEIN 1"/>
    <property type="match status" value="1"/>
</dbReference>
<dbReference type="Pfam" id="PF00085">
    <property type="entry name" value="Thioredoxin"/>
    <property type="match status" value="1"/>
</dbReference>
<dbReference type="PRINTS" id="PR00421">
    <property type="entry name" value="THIOREDOXIN"/>
</dbReference>
<dbReference type="SUPFAM" id="SSF52833">
    <property type="entry name" value="Thioredoxin-like"/>
    <property type="match status" value="1"/>
</dbReference>
<dbReference type="PROSITE" id="PS00194">
    <property type="entry name" value="THIOREDOXIN_1"/>
    <property type="match status" value="1"/>
</dbReference>
<dbReference type="PROSITE" id="PS51352">
    <property type="entry name" value="THIOREDOXIN_2"/>
    <property type="match status" value="1"/>
</dbReference>
<accession>Q1RQJ1</accession>
<evidence type="ECO:0000250" key="1">
    <source>
        <dbReference type="UniProtKB" id="P10599"/>
    </source>
</evidence>
<evidence type="ECO:0000255" key="2">
    <source>
        <dbReference type="PROSITE-ProRule" id="PRU00691"/>
    </source>
</evidence>
<evidence type="ECO:0000269" key="3">
    <source>
    </source>
</evidence>
<evidence type="ECO:0000269" key="4">
    <source>
    </source>
</evidence>
<evidence type="ECO:0000303" key="5">
    <source>
    </source>
</evidence>
<evidence type="ECO:0000303" key="6">
    <source>
    </source>
</evidence>
<evidence type="ECO:0000305" key="7"/>
<evidence type="ECO:0000312" key="8">
    <source>
        <dbReference type="EMBL" id="CAI78449.1"/>
    </source>
</evidence>
<proteinExistence type="evidence at protein level"/>
<protein>
    <recommendedName>
        <fullName evidence="7">Thioredoxin Asp f 28</fullName>
        <shortName evidence="5 6">Trx</shortName>
    </recommendedName>
    <alternativeName>
        <fullName evidence="5 6">Allergen Asp f 28</fullName>
    </alternativeName>
    <allergenName evidence="7">Asp f 28.0101</allergenName>
</protein>
<reference evidence="8" key="1">
    <citation type="journal article" date="2007" name="J. Immunol.">
        <title>Cross-reactivity and 1.4-A crystal structure of Malassezia sympodialis thioredoxin (Mala s 13), a member of a new pan-allergen family.</title>
        <authorList>
            <person name="Limacher A."/>
            <person name="Glaser A.G."/>
            <person name="Meier C."/>
            <person name="Schmid-Grendelmeier P."/>
            <person name="Zeller S."/>
            <person name="Scapozza L."/>
            <person name="Crameri R."/>
        </authorList>
    </citation>
    <scope>NUCLEOTIDE SEQUENCE [MRNA]</scope>
    <scope>FUNCTION</scope>
    <scope>ALLERGEN</scope>
    <source>
        <strain evidence="8">ATCC 42202 / AF-102 / Ag 507</strain>
    </source>
</reference>
<reference key="2">
    <citation type="journal article" date="2008" name="Allergy">
        <title>Auto- and cross-reactivity to thioredoxin allergens in allergic bronchopulmonary aspergillosis.</title>
        <authorList>
            <person name="Glaser A.G."/>
            <person name="Menz G."/>
            <person name="Kirsch A.I."/>
            <person name="Zeller S."/>
            <person name="Crameri R."/>
            <person name="Rhyner C."/>
        </authorList>
    </citation>
    <scope>FUNCTION</scope>
    <scope>ALLERGEN</scope>
    <scope>3D-STRUCTURE MODELING</scope>
</reference>
<organism evidence="8">
    <name type="scientific">Aspergillus fumigatus</name>
    <name type="common">Neosartorya fumigata</name>
    <dbReference type="NCBI Taxonomy" id="746128"/>
    <lineage>
        <taxon>Eukaryota</taxon>
        <taxon>Fungi</taxon>
        <taxon>Dikarya</taxon>
        <taxon>Ascomycota</taxon>
        <taxon>Pezizomycotina</taxon>
        <taxon>Eurotiomycetes</taxon>
        <taxon>Eurotiomycetidae</taxon>
        <taxon>Eurotiales</taxon>
        <taxon>Aspergillaceae</taxon>
        <taxon>Aspergillus</taxon>
        <taxon>Aspergillus subgen. Fumigati</taxon>
    </lineage>
</organism>
<name>THX28_ASPFM</name>
<comment type="function">
    <text evidence="3 4">Participates in various redox reactions through the reversible oxidation of its active center dithiol to a disulfide and catalyzes dithiol-disulfide exchange reactions.</text>
</comment>
<comment type="allergen">
    <text evidence="3 4">Causes an allergic reaction in human (PubMed:17182577, PubMed:19032234). Recombinant protein binds to IgE in atopic eczema-suffering patients allergic to yeast M.sympodialis (PubMed:17182577). Recombinant protein binds to IgE in 30% of the 40 patients tested suffering from allergic bronchopulmonary aspergillosis (ABPA). Causes a positive skin reaction and induces proliferation of the human peripheral blood mononuclear cells in ABPA patients allergic to this protein (PubMed:19032234).</text>
</comment>
<comment type="similarity">
    <text evidence="7">Belongs to the thioredoxin family.</text>
</comment>
<keyword id="KW-0020">Allergen</keyword>
<keyword id="KW-1015">Disulfide bond</keyword>
<keyword id="KW-0676">Redox-active center</keyword>
<feature type="chain" id="PRO_0000449238" description="Thioredoxin Asp f 28">
    <location>
        <begin position="1"/>
        <end position="108"/>
    </location>
</feature>
<feature type="domain" description="Thioredoxin" evidence="2">
    <location>
        <begin position="1"/>
        <end position="108"/>
    </location>
</feature>
<feature type="active site" description="Nucleophile" evidence="1">
    <location>
        <position position="33"/>
    </location>
</feature>
<feature type="active site" description="Nucleophile" evidence="1">
    <location>
        <position position="36"/>
    </location>
</feature>
<feature type="site" description="Deprotonates C-terminal active site Cys" evidence="1">
    <location>
        <position position="27"/>
    </location>
</feature>
<feature type="site" description="Contributes to redox potential value" evidence="1">
    <location>
        <position position="34"/>
    </location>
</feature>
<feature type="site" description="Contributes to redox potential value" evidence="1">
    <location>
        <position position="35"/>
    </location>
</feature>
<feature type="disulfide bond" description="Redox-active" evidence="2">
    <location>
        <begin position="33"/>
        <end position="36"/>
    </location>
</feature>
<sequence>MSHGKVIAVDNPIIYKALTSSGPVVVDFFATWCGPCRAVAPKVGELSEKYSNVRFIQVDVDKVRSVAHEMNIRAMPTFVLYKDGQPLEKRVVGGNVRELEEMIKSISA</sequence>